<keyword id="KW-0274">FAD</keyword>
<keyword id="KW-0285">Flavoprotein</keyword>
<keyword id="KW-0444">Lipid biosynthesis</keyword>
<keyword id="KW-0443">Lipid metabolism</keyword>
<keyword id="KW-0560">Oxidoreductase</keyword>
<keyword id="KW-0594">Phospholipid biosynthesis</keyword>
<keyword id="KW-1208">Phospholipid metabolism</keyword>
<keyword id="KW-1185">Reference proteome</keyword>
<protein>
    <recommendedName>
        <fullName evidence="1">Digeranylgeranylglycerophospholipid reductase</fullName>
        <shortName evidence="1">DGGGPL reductase</shortName>
        <ecNumber evidence="1">1.3.7.11</ecNumber>
    </recommendedName>
    <alternativeName>
        <fullName evidence="1">2,3-bis-O-geranylgeranylglyceryl phosphate reductase</fullName>
    </alternativeName>
    <alternativeName>
        <fullName evidence="1">Geranylgeranyl reductase</fullName>
        <shortName evidence="1">GGR</shortName>
    </alternativeName>
</protein>
<dbReference type="EC" id="1.3.7.11" evidence="1"/>
<dbReference type="EMBL" id="CP001338">
    <property type="protein sequence ID" value="ACL16314.1"/>
    <property type="molecule type" value="Genomic_DNA"/>
</dbReference>
<dbReference type="RefSeq" id="WP_012617633.1">
    <property type="nucleotide sequence ID" value="NC_011832.1"/>
</dbReference>
<dbReference type="SMR" id="B8GGQ9"/>
<dbReference type="STRING" id="521011.Mpal_0962"/>
<dbReference type="GeneID" id="7272370"/>
<dbReference type="KEGG" id="mpl:Mpal_0962"/>
<dbReference type="eggNOG" id="arCOG00570">
    <property type="taxonomic scope" value="Archaea"/>
</dbReference>
<dbReference type="HOGENOM" id="CLU_024648_0_0_2"/>
<dbReference type="OrthoDB" id="6062at2157"/>
<dbReference type="UniPathway" id="UPA00940"/>
<dbReference type="Proteomes" id="UP000002457">
    <property type="component" value="Chromosome"/>
</dbReference>
<dbReference type="GO" id="GO:0016020">
    <property type="term" value="C:membrane"/>
    <property type="evidence" value="ECO:0007669"/>
    <property type="project" value="GOC"/>
</dbReference>
<dbReference type="GO" id="GO:0050660">
    <property type="term" value="F:flavin adenine dinucleotide binding"/>
    <property type="evidence" value="ECO:0007669"/>
    <property type="project" value="UniProtKB-UniRule"/>
</dbReference>
<dbReference type="GO" id="GO:0045550">
    <property type="term" value="F:geranylgeranyl reductase activity"/>
    <property type="evidence" value="ECO:0007669"/>
    <property type="project" value="InterPro"/>
</dbReference>
<dbReference type="GO" id="GO:0016636">
    <property type="term" value="F:oxidoreductase activity, acting on the CH-CH group of donors, iron-sulfur protein as acceptor"/>
    <property type="evidence" value="ECO:0007669"/>
    <property type="project" value="UniProtKB-UniRule"/>
</dbReference>
<dbReference type="GO" id="GO:0016628">
    <property type="term" value="F:oxidoreductase activity, acting on the CH-CH group of donors, NAD or NADP as acceptor"/>
    <property type="evidence" value="ECO:0007669"/>
    <property type="project" value="InterPro"/>
</dbReference>
<dbReference type="GO" id="GO:0046474">
    <property type="term" value="P:glycerophospholipid biosynthetic process"/>
    <property type="evidence" value="ECO:0007669"/>
    <property type="project" value="UniProtKB-UniRule"/>
</dbReference>
<dbReference type="GO" id="GO:0046467">
    <property type="term" value="P:membrane lipid biosynthetic process"/>
    <property type="evidence" value="ECO:0007669"/>
    <property type="project" value="InterPro"/>
</dbReference>
<dbReference type="Gene3D" id="3.30.9.10">
    <property type="entry name" value="D-Amino Acid Oxidase, subunit A, domain 2"/>
    <property type="match status" value="1"/>
</dbReference>
<dbReference type="Gene3D" id="3.50.50.60">
    <property type="entry name" value="FAD/NAD(P)-binding domain"/>
    <property type="match status" value="1"/>
</dbReference>
<dbReference type="HAMAP" id="MF_01287">
    <property type="entry name" value="DGGGPL_reductase"/>
    <property type="match status" value="1"/>
</dbReference>
<dbReference type="InterPro" id="IPR023590">
    <property type="entry name" value="DGGGPL_reductase"/>
</dbReference>
<dbReference type="InterPro" id="IPR036188">
    <property type="entry name" value="FAD/NAD-bd_sf"/>
</dbReference>
<dbReference type="InterPro" id="IPR011777">
    <property type="entry name" value="Geranylgeranyl_Rdtase_fam"/>
</dbReference>
<dbReference type="InterPro" id="IPR050407">
    <property type="entry name" value="Geranylgeranyl_reductase"/>
</dbReference>
<dbReference type="InterPro" id="IPR054715">
    <property type="entry name" value="GGR_cat"/>
</dbReference>
<dbReference type="NCBIfam" id="TIGR02032">
    <property type="entry name" value="GG-red-SF"/>
    <property type="match status" value="1"/>
</dbReference>
<dbReference type="PANTHER" id="PTHR42685:SF18">
    <property type="entry name" value="DIGERANYLGERANYLGLYCEROPHOSPHOLIPID REDUCTASE"/>
    <property type="match status" value="1"/>
</dbReference>
<dbReference type="PANTHER" id="PTHR42685">
    <property type="entry name" value="GERANYLGERANYL DIPHOSPHATE REDUCTASE"/>
    <property type="match status" value="1"/>
</dbReference>
<dbReference type="Pfam" id="PF12831">
    <property type="entry name" value="FAD_oxidored"/>
    <property type="match status" value="1"/>
</dbReference>
<dbReference type="Pfam" id="PF22578">
    <property type="entry name" value="GGR_cat"/>
    <property type="match status" value="1"/>
</dbReference>
<dbReference type="PRINTS" id="PR00420">
    <property type="entry name" value="RNGMNOXGNASE"/>
</dbReference>
<dbReference type="SUPFAM" id="SSF51905">
    <property type="entry name" value="FAD/NAD(P)-binding domain"/>
    <property type="match status" value="1"/>
</dbReference>
<comment type="function">
    <text evidence="1">Is involved in the reduction of 2,3-digeranylgeranylglycerophospholipids (unsaturated archaeols) into 2,3-diphytanylglycerophospholipids (saturated archaeols) in the biosynthesis of archaeal membrane lipids. Catalyzes the formation of archaetidic acid (2,3-di-O-phytanyl-sn-glyceryl phosphate) from 2,3-di-O-geranylgeranylglyceryl phosphate (DGGGP) via the hydrogenation of each double bond of the isoprenoid chains. Is also probably able to reduce double bonds of geranyl groups in CDP-2,3-bis-O-(geranylgeranyl)-sn-glycerol and archaetidylserine, thus acting at various stages in the biosynthesis of archaeal membrane lipids.</text>
</comment>
<comment type="catalytic activity">
    <reaction evidence="1">
        <text>a 2,3-bis-O-phytanyl-sn-glycerol 1-phospholipid + 8 oxidized 2[4Fe-4S]-[ferredoxin] = a 2,3-bis-O-(geranylgeranyl)-sn-glycerol 1-phospholipid + 8 reduced 2[4Fe-4S]-[ferredoxin] + 16 H(+)</text>
        <dbReference type="Rhea" id="RHEA:54324"/>
        <dbReference type="Rhea" id="RHEA-COMP:10002"/>
        <dbReference type="Rhea" id="RHEA-COMP:10004"/>
        <dbReference type="ChEBI" id="CHEBI:15378"/>
        <dbReference type="ChEBI" id="CHEBI:33722"/>
        <dbReference type="ChEBI" id="CHEBI:33723"/>
        <dbReference type="ChEBI" id="CHEBI:138139"/>
        <dbReference type="ChEBI" id="CHEBI:138140"/>
        <dbReference type="EC" id="1.3.7.11"/>
    </reaction>
    <physiologicalReaction direction="right-to-left" evidence="1">
        <dbReference type="Rhea" id="RHEA:54326"/>
    </physiologicalReaction>
</comment>
<comment type="catalytic activity">
    <reaction evidence="1">
        <text>2,3-bis-O-(phytanyl)-sn-glycerol 1-phosphate + 8 oxidized 2[4Fe-4S]-[ferredoxin] = 2,3-bis-O-(geranylgeranyl)-sn-glycerol 1-phosphate + 8 reduced 2[4Fe-4S]-[ferredoxin] + 16 H(+)</text>
        <dbReference type="Rhea" id="RHEA:36159"/>
        <dbReference type="Rhea" id="RHEA-COMP:10002"/>
        <dbReference type="Rhea" id="RHEA-COMP:10004"/>
        <dbReference type="ChEBI" id="CHEBI:15378"/>
        <dbReference type="ChEBI" id="CHEBI:33722"/>
        <dbReference type="ChEBI" id="CHEBI:33723"/>
        <dbReference type="ChEBI" id="CHEBI:58837"/>
        <dbReference type="ChEBI" id="CHEBI:73125"/>
        <dbReference type="EC" id="1.3.7.11"/>
    </reaction>
    <physiologicalReaction direction="right-to-left" evidence="1">
        <dbReference type="Rhea" id="RHEA:36161"/>
    </physiologicalReaction>
</comment>
<comment type="catalytic activity">
    <reaction evidence="1">
        <text>a 2,3-bis-O-phytanyl-sn-glycerol 1-phospholipid + 8 A = a 2,3-bis-O-(geranylgeranyl)-sn-glycerol 1-phospholipid + 8 AH2</text>
        <dbReference type="Rhea" id="RHEA:64376"/>
        <dbReference type="ChEBI" id="CHEBI:13193"/>
        <dbReference type="ChEBI" id="CHEBI:17499"/>
        <dbReference type="ChEBI" id="CHEBI:138139"/>
        <dbReference type="ChEBI" id="CHEBI:138140"/>
    </reaction>
    <physiologicalReaction direction="right-to-left" evidence="1">
        <dbReference type="Rhea" id="RHEA:64378"/>
    </physiologicalReaction>
</comment>
<comment type="catalytic activity">
    <reaction evidence="1">
        <text>CDP-2,3-bis-O-(geranylgeranyl)-sn-glycerol + 8 AH2 = CDP-2,3-bis-O-(phytanyl)-sn-glycerol + 8 A</text>
        <dbReference type="Rhea" id="RHEA:84207"/>
        <dbReference type="ChEBI" id="CHEBI:13193"/>
        <dbReference type="ChEBI" id="CHEBI:17499"/>
        <dbReference type="ChEBI" id="CHEBI:58838"/>
        <dbReference type="ChEBI" id="CHEBI:74004"/>
    </reaction>
    <physiologicalReaction direction="left-to-right" evidence="1">
        <dbReference type="Rhea" id="RHEA:84208"/>
    </physiologicalReaction>
</comment>
<comment type="catalytic activity">
    <reaction evidence="1">
        <text>archaetidylserine + 8 AH2 = 2,3-bis-O-phytanyl-sn-glycero-3-phospho-L-serine + 8 A</text>
        <dbReference type="Rhea" id="RHEA:84215"/>
        <dbReference type="ChEBI" id="CHEBI:13193"/>
        <dbReference type="ChEBI" id="CHEBI:17499"/>
        <dbReference type="ChEBI" id="CHEBI:71517"/>
        <dbReference type="ChEBI" id="CHEBI:74853"/>
    </reaction>
    <physiologicalReaction direction="left-to-right" evidence="1">
        <dbReference type="Rhea" id="RHEA:84216"/>
    </physiologicalReaction>
</comment>
<comment type="cofactor">
    <cofactor evidence="1">
        <name>FAD</name>
        <dbReference type="ChEBI" id="CHEBI:57692"/>
    </cofactor>
    <text evidence="1">Binds 1 FAD per subunit.</text>
</comment>
<comment type="pathway">
    <text evidence="1">Membrane lipid metabolism; glycerophospholipid metabolism.</text>
</comment>
<comment type="miscellaneous">
    <text evidence="1">Reduction reaction proceeds via syn addition of hydrogen for double bonds.</text>
</comment>
<comment type="similarity">
    <text evidence="1">Belongs to the geranylgeranyl reductase family. DGGGPL reductase subfamily.</text>
</comment>
<organism>
    <name type="scientific">Methanosphaerula palustris (strain ATCC BAA-1556 / DSM 19958 / E1-9c)</name>
    <dbReference type="NCBI Taxonomy" id="521011"/>
    <lineage>
        <taxon>Archaea</taxon>
        <taxon>Methanobacteriati</taxon>
        <taxon>Methanobacteriota</taxon>
        <taxon>Stenosarchaea group</taxon>
        <taxon>Methanomicrobia</taxon>
        <taxon>Methanomicrobiales</taxon>
        <taxon>Methanoregulaceae</taxon>
        <taxon>Methanosphaerula</taxon>
    </lineage>
</organism>
<name>GGR_METPE</name>
<reference key="1">
    <citation type="journal article" date="2015" name="Genome Announc.">
        <title>Complete Genome Sequence of Methanosphaerula palustris E1-9CT, a Hydrogenotrophic Methanogen Isolated from a Minerotrophic Fen Peatland.</title>
        <authorList>
            <person name="Cadillo-Quiroz H."/>
            <person name="Browne P."/>
            <person name="Kyrpides N."/>
            <person name="Woyke T."/>
            <person name="Goodwin L."/>
            <person name="Detter C."/>
            <person name="Yavitt J.B."/>
            <person name="Zinder S.H."/>
        </authorList>
    </citation>
    <scope>NUCLEOTIDE SEQUENCE [LARGE SCALE GENOMIC DNA]</scope>
    <source>
        <strain>ATCC BAA-1556 / DSM 19958 / E1-9c</strain>
    </source>
</reference>
<proteinExistence type="inferred from homology"/>
<evidence type="ECO:0000255" key="1">
    <source>
        <dbReference type="HAMAP-Rule" id="MF_01287"/>
    </source>
</evidence>
<accession>B8GGQ9</accession>
<sequence>MKTEYDILIIGAGPGGAMAAKTAAEEGLSVLMVEKRPAIGTPVRCAEGVGKELLHEFIGPDPAWISADIERATIVGPDGTSMSLEAQRAGNEVGYILDRKVFDRALVWQAAEAGAEVQVKTRAIAPILENGFVRGARLQGYGTTTDVRAKVVIAADGVESKFARWCGVDTAVPVNEIETCAQYLLTDIDIDESATVFYLGNEIAPEGYAWVFPKGKRTANVGLGISGKKNLPGNRPIDYLNRFVEKNFPNGKTIECIVGGVSVCTPLASTVSDGLMIVGDAARISDPLTGGGIYNAMYSGRLAAQVAIECIKRGDCSRAALAAYDQQWRVSAMGKALDRNYKIKEYFIRQSDEKLNALAHSFKKINMEKFSTLELIKELIKHNPKLLFELKTLRDSLNS</sequence>
<gene>
    <name type="ordered locus">Mpal_0962</name>
</gene>
<feature type="chain" id="PRO_1000165260" description="Digeranylgeranylglycerophospholipid reductase">
    <location>
        <begin position="1"/>
        <end position="399"/>
    </location>
</feature>
<feature type="binding site" evidence="1">
    <location>
        <position position="15"/>
    </location>
    <ligand>
        <name>FAD</name>
        <dbReference type="ChEBI" id="CHEBI:57692"/>
    </ligand>
</feature>
<feature type="binding site" evidence="1">
    <location>
        <position position="34"/>
    </location>
    <ligand>
        <name>FAD</name>
        <dbReference type="ChEBI" id="CHEBI:57692"/>
    </ligand>
</feature>
<feature type="binding site" evidence="1">
    <location>
        <position position="45"/>
    </location>
    <ligand>
        <name>FAD</name>
        <dbReference type="ChEBI" id="CHEBI:57692"/>
    </ligand>
</feature>
<feature type="binding site" evidence="1">
    <location>
        <position position="46"/>
    </location>
    <ligand>
        <name>FAD</name>
        <dbReference type="ChEBI" id="CHEBI:57692"/>
    </ligand>
</feature>
<feature type="binding site" evidence="1">
    <location>
        <position position="48"/>
    </location>
    <ligand>
        <name>FAD</name>
        <dbReference type="ChEBI" id="CHEBI:57692"/>
    </ligand>
</feature>
<feature type="binding site" evidence="1">
    <location>
        <position position="99"/>
    </location>
    <ligand>
        <name>FAD</name>
        <dbReference type="ChEBI" id="CHEBI:57692"/>
    </ligand>
</feature>
<feature type="binding site" evidence="1">
    <location>
        <position position="123"/>
    </location>
    <ligand>
        <name>FAD</name>
        <dbReference type="ChEBI" id="CHEBI:57692"/>
    </ligand>
</feature>
<feature type="binding site" evidence="1">
    <location>
        <position position="280"/>
    </location>
    <ligand>
        <name>FAD</name>
        <dbReference type="ChEBI" id="CHEBI:57692"/>
    </ligand>
</feature>
<feature type="binding site" evidence="1">
    <location>
        <position position="292"/>
    </location>
    <ligand>
        <name>FAD</name>
        <dbReference type="ChEBI" id="CHEBI:57692"/>
    </ligand>
</feature>
<feature type="binding site" evidence="1">
    <location>
        <position position="293"/>
    </location>
    <ligand>
        <name>FAD</name>
        <dbReference type="ChEBI" id="CHEBI:57692"/>
    </ligand>
</feature>